<evidence type="ECO:0000255" key="1">
    <source>
        <dbReference type="HAMAP-Rule" id="MF_00049"/>
    </source>
</evidence>
<accession>Q32IT9</accession>
<keyword id="KW-0030">Aminoacyl-tRNA synthetase</keyword>
<keyword id="KW-0067">ATP-binding</keyword>
<keyword id="KW-0963">Cytoplasm</keyword>
<keyword id="KW-0436">Ligase</keyword>
<keyword id="KW-0547">Nucleotide-binding</keyword>
<keyword id="KW-0648">Protein biosynthesis</keyword>
<keyword id="KW-1185">Reference proteome</keyword>
<gene>
    <name evidence="1" type="primary">leuS</name>
    <name type="ordered locus">SDY_0564</name>
</gene>
<organism>
    <name type="scientific">Shigella dysenteriae serotype 1 (strain Sd197)</name>
    <dbReference type="NCBI Taxonomy" id="300267"/>
    <lineage>
        <taxon>Bacteria</taxon>
        <taxon>Pseudomonadati</taxon>
        <taxon>Pseudomonadota</taxon>
        <taxon>Gammaproteobacteria</taxon>
        <taxon>Enterobacterales</taxon>
        <taxon>Enterobacteriaceae</taxon>
        <taxon>Shigella</taxon>
    </lineage>
</organism>
<name>SYL_SHIDS</name>
<comment type="catalytic activity">
    <reaction evidence="1">
        <text>tRNA(Leu) + L-leucine + ATP = L-leucyl-tRNA(Leu) + AMP + diphosphate</text>
        <dbReference type="Rhea" id="RHEA:11688"/>
        <dbReference type="Rhea" id="RHEA-COMP:9613"/>
        <dbReference type="Rhea" id="RHEA-COMP:9622"/>
        <dbReference type="ChEBI" id="CHEBI:30616"/>
        <dbReference type="ChEBI" id="CHEBI:33019"/>
        <dbReference type="ChEBI" id="CHEBI:57427"/>
        <dbReference type="ChEBI" id="CHEBI:78442"/>
        <dbReference type="ChEBI" id="CHEBI:78494"/>
        <dbReference type="ChEBI" id="CHEBI:456215"/>
        <dbReference type="EC" id="6.1.1.4"/>
    </reaction>
</comment>
<comment type="subcellular location">
    <subcellularLocation>
        <location evidence="1">Cytoplasm</location>
    </subcellularLocation>
</comment>
<comment type="similarity">
    <text evidence="1">Belongs to the class-I aminoacyl-tRNA synthetase family.</text>
</comment>
<protein>
    <recommendedName>
        <fullName evidence="1">Leucine--tRNA ligase</fullName>
        <ecNumber evidence="1">6.1.1.4</ecNumber>
    </recommendedName>
    <alternativeName>
        <fullName evidence="1">Leucyl-tRNA synthetase</fullName>
        <shortName evidence="1">LeuRS</shortName>
    </alternativeName>
</protein>
<proteinExistence type="inferred from homology"/>
<reference key="1">
    <citation type="journal article" date="2005" name="Nucleic Acids Res.">
        <title>Genome dynamics and diversity of Shigella species, the etiologic agents of bacillary dysentery.</title>
        <authorList>
            <person name="Yang F."/>
            <person name="Yang J."/>
            <person name="Zhang X."/>
            <person name="Chen L."/>
            <person name="Jiang Y."/>
            <person name="Yan Y."/>
            <person name="Tang X."/>
            <person name="Wang J."/>
            <person name="Xiong Z."/>
            <person name="Dong J."/>
            <person name="Xue Y."/>
            <person name="Zhu Y."/>
            <person name="Xu X."/>
            <person name="Sun L."/>
            <person name="Chen S."/>
            <person name="Nie H."/>
            <person name="Peng J."/>
            <person name="Xu J."/>
            <person name="Wang Y."/>
            <person name="Yuan Z."/>
            <person name="Wen Y."/>
            <person name="Yao Z."/>
            <person name="Shen Y."/>
            <person name="Qiang B."/>
            <person name="Hou Y."/>
            <person name="Yu J."/>
            <person name="Jin Q."/>
        </authorList>
    </citation>
    <scope>NUCLEOTIDE SEQUENCE [LARGE SCALE GENOMIC DNA]</scope>
    <source>
        <strain>Sd197</strain>
    </source>
</reference>
<feature type="chain" id="PRO_1000009431" description="Leucine--tRNA ligase">
    <location>
        <begin position="1"/>
        <end position="860"/>
    </location>
</feature>
<feature type="short sequence motif" description="'HIGH' region">
    <location>
        <begin position="42"/>
        <end position="52"/>
    </location>
</feature>
<feature type="short sequence motif" description="'KMSKS' region">
    <location>
        <begin position="619"/>
        <end position="623"/>
    </location>
</feature>
<feature type="binding site" evidence="1">
    <location>
        <position position="622"/>
    </location>
    <ligand>
        <name>ATP</name>
        <dbReference type="ChEBI" id="CHEBI:30616"/>
    </ligand>
</feature>
<sequence length="860" mass="97249">MQEQYRPEEIESKVQLHWDEKRTFEVTEDESKEKYYCLSMLPYPSGRLHMGHVRNYTIGDVIARYQRMLGKNVLQPIGWDAFGLPAEGAAVKNNTAPAPWTYDNIAYMKNQLKMLGFGYDWSRELATCTPEYYRWEQKFFTELYKKGLVYKKTSAVNWCPNDQTVLANEQVIDGCCWRCDTKVERKEIPQWFIKITAYADELLNDLDKLDHWPDTVKTMQRNWIGRSEGVEITFNVNDYDNTLTVYTTRPDTFMGCTYLAVAAGHPLAQKAAENNPELAAFIDECRNTKVAEAEMATMEKKGVDTGFKAVHPLTGEEIPVWAANFVLMEYGTGAVMAVPGHDQRDYEFASKYGLNIKPVILAADGSEPDLSQQALTEKGVLFNSGEFNGLDHEAAFNAIADKLTAMGVGERKVNYRLRDWGVSRQRYWGAPIPMVTLEDGTVMPTPDDQLPVILPEDVVMDGITSPIKADPEWAKTTINGMPALRETDTFDTFMESSWYYARYTCPQYKEGMLDSEAANYWLPVDIYIGGIEHAIMHLLYFRFFHKLMRDAGMVNSDEPAKQLLCQGMVLADAFYYVGENGERNWVSPVDAIVERDEKGRIVKAKDAAGHELVYTGMSKMSKSKNNGIDPQVMVERYGADTVRLFMMFASPADMTLEWQESGVEGANRFLKRVWKLVYEHTAKGDVAALNVDALTEDQKALRRDVHKTIAKVTDDIGRRQTFNTAIAAIMELMNKLAKAPTDGEQDRALMQEALLAVVRMLNPFTPHICFTLWQELKGEGDIDNAPWPVADEKAMVEDSTLVVVQVNGKVRAKITVPVDATEEQVRERAGQEHLVAKYLDGVTVRKVIYVPGKLLNLVVG</sequence>
<dbReference type="EC" id="6.1.1.4" evidence="1"/>
<dbReference type="EMBL" id="CP000034">
    <property type="protein sequence ID" value="ABB60768.1"/>
    <property type="molecule type" value="Genomic_DNA"/>
</dbReference>
<dbReference type="RefSeq" id="WP_011378592.1">
    <property type="nucleotide sequence ID" value="NC_007606.1"/>
</dbReference>
<dbReference type="RefSeq" id="YP_402257.1">
    <property type="nucleotide sequence ID" value="NC_007606.1"/>
</dbReference>
<dbReference type="SMR" id="Q32IT9"/>
<dbReference type="STRING" id="300267.SDY_0564"/>
<dbReference type="EnsemblBacteria" id="ABB60768">
    <property type="protein sequence ID" value="ABB60768"/>
    <property type="gene ID" value="SDY_0564"/>
</dbReference>
<dbReference type="KEGG" id="sdy:SDY_0564"/>
<dbReference type="PATRIC" id="fig|300267.13.peg.666"/>
<dbReference type="HOGENOM" id="CLU_004427_0_0_6"/>
<dbReference type="Proteomes" id="UP000002716">
    <property type="component" value="Chromosome"/>
</dbReference>
<dbReference type="GO" id="GO:0005829">
    <property type="term" value="C:cytosol"/>
    <property type="evidence" value="ECO:0007669"/>
    <property type="project" value="TreeGrafter"/>
</dbReference>
<dbReference type="GO" id="GO:0002161">
    <property type="term" value="F:aminoacyl-tRNA deacylase activity"/>
    <property type="evidence" value="ECO:0007669"/>
    <property type="project" value="InterPro"/>
</dbReference>
<dbReference type="GO" id="GO:0005524">
    <property type="term" value="F:ATP binding"/>
    <property type="evidence" value="ECO:0007669"/>
    <property type="project" value="UniProtKB-UniRule"/>
</dbReference>
<dbReference type="GO" id="GO:0004823">
    <property type="term" value="F:leucine-tRNA ligase activity"/>
    <property type="evidence" value="ECO:0007669"/>
    <property type="project" value="UniProtKB-UniRule"/>
</dbReference>
<dbReference type="GO" id="GO:0006429">
    <property type="term" value="P:leucyl-tRNA aminoacylation"/>
    <property type="evidence" value="ECO:0007669"/>
    <property type="project" value="UniProtKB-UniRule"/>
</dbReference>
<dbReference type="CDD" id="cd07958">
    <property type="entry name" value="Anticodon_Ia_Leu_BEm"/>
    <property type="match status" value="1"/>
</dbReference>
<dbReference type="CDD" id="cd00812">
    <property type="entry name" value="LeuRS_core"/>
    <property type="match status" value="1"/>
</dbReference>
<dbReference type="FunFam" id="1.10.730.10:FF:000002">
    <property type="entry name" value="Leucine--tRNA ligase"/>
    <property type="match status" value="2"/>
</dbReference>
<dbReference type="FunFam" id="2.20.28.290:FF:000001">
    <property type="entry name" value="Leucine--tRNA ligase"/>
    <property type="match status" value="1"/>
</dbReference>
<dbReference type="FunFam" id="3.10.20.590:FF:000001">
    <property type="entry name" value="Leucine--tRNA ligase"/>
    <property type="match status" value="1"/>
</dbReference>
<dbReference type="FunFam" id="3.40.50.620:FF:000003">
    <property type="entry name" value="Leucine--tRNA ligase"/>
    <property type="match status" value="1"/>
</dbReference>
<dbReference type="FunFam" id="3.40.50.620:FF:000124">
    <property type="entry name" value="Leucine--tRNA ligase"/>
    <property type="match status" value="1"/>
</dbReference>
<dbReference type="FunFam" id="3.90.740.10:FF:000012">
    <property type="entry name" value="Leucine--tRNA ligase"/>
    <property type="match status" value="1"/>
</dbReference>
<dbReference type="Gene3D" id="2.20.28.290">
    <property type="match status" value="1"/>
</dbReference>
<dbReference type="Gene3D" id="3.10.20.590">
    <property type="match status" value="1"/>
</dbReference>
<dbReference type="Gene3D" id="3.40.50.620">
    <property type="entry name" value="HUPs"/>
    <property type="match status" value="2"/>
</dbReference>
<dbReference type="Gene3D" id="1.10.730.10">
    <property type="entry name" value="Isoleucyl-tRNA Synthetase, Domain 1"/>
    <property type="match status" value="1"/>
</dbReference>
<dbReference type="HAMAP" id="MF_00049_B">
    <property type="entry name" value="Leu_tRNA_synth_B"/>
    <property type="match status" value="1"/>
</dbReference>
<dbReference type="InterPro" id="IPR001412">
    <property type="entry name" value="aa-tRNA-synth_I_CS"/>
</dbReference>
<dbReference type="InterPro" id="IPR002300">
    <property type="entry name" value="aa-tRNA-synth_Ia"/>
</dbReference>
<dbReference type="InterPro" id="IPR002302">
    <property type="entry name" value="Leu-tRNA-ligase"/>
</dbReference>
<dbReference type="InterPro" id="IPR025709">
    <property type="entry name" value="Leu_tRNA-synth_edit"/>
</dbReference>
<dbReference type="InterPro" id="IPR013155">
    <property type="entry name" value="M/V/L/I-tRNA-synth_anticd-bd"/>
</dbReference>
<dbReference type="InterPro" id="IPR015413">
    <property type="entry name" value="Methionyl/Leucyl_tRNA_Synth"/>
</dbReference>
<dbReference type="InterPro" id="IPR014729">
    <property type="entry name" value="Rossmann-like_a/b/a_fold"/>
</dbReference>
<dbReference type="InterPro" id="IPR009080">
    <property type="entry name" value="tRNAsynth_Ia_anticodon-bd"/>
</dbReference>
<dbReference type="InterPro" id="IPR009008">
    <property type="entry name" value="Val/Leu/Ile-tRNA-synth_edit"/>
</dbReference>
<dbReference type="NCBIfam" id="TIGR00396">
    <property type="entry name" value="leuS_bact"/>
    <property type="match status" value="1"/>
</dbReference>
<dbReference type="PANTHER" id="PTHR43740:SF2">
    <property type="entry name" value="LEUCINE--TRNA LIGASE, MITOCHONDRIAL"/>
    <property type="match status" value="1"/>
</dbReference>
<dbReference type="PANTHER" id="PTHR43740">
    <property type="entry name" value="LEUCYL-TRNA SYNTHETASE"/>
    <property type="match status" value="1"/>
</dbReference>
<dbReference type="Pfam" id="PF08264">
    <property type="entry name" value="Anticodon_1"/>
    <property type="match status" value="1"/>
</dbReference>
<dbReference type="Pfam" id="PF00133">
    <property type="entry name" value="tRNA-synt_1"/>
    <property type="match status" value="2"/>
</dbReference>
<dbReference type="Pfam" id="PF13603">
    <property type="entry name" value="tRNA-synt_1_2"/>
    <property type="match status" value="1"/>
</dbReference>
<dbReference type="Pfam" id="PF09334">
    <property type="entry name" value="tRNA-synt_1g"/>
    <property type="match status" value="1"/>
</dbReference>
<dbReference type="PRINTS" id="PR00985">
    <property type="entry name" value="TRNASYNTHLEU"/>
</dbReference>
<dbReference type="SUPFAM" id="SSF47323">
    <property type="entry name" value="Anticodon-binding domain of a subclass of class I aminoacyl-tRNA synthetases"/>
    <property type="match status" value="1"/>
</dbReference>
<dbReference type="SUPFAM" id="SSF52374">
    <property type="entry name" value="Nucleotidylyl transferase"/>
    <property type="match status" value="1"/>
</dbReference>
<dbReference type="SUPFAM" id="SSF50677">
    <property type="entry name" value="ValRS/IleRS/LeuRS editing domain"/>
    <property type="match status" value="1"/>
</dbReference>
<dbReference type="PROSITE" id="PS00178">
    <property type="entry name" value="AA_TRNA_LIGASE_I"/>
    <property type="match status" value="1"/>
</dbReference>